<accession>P02029</accession>
<gene>
    <name type="primary">HBB</name>
</gene>
<feature type="chain" id="PRO_0000053129" description="Hemoglobin subunit beta">
    <location>
        <begin position="1"/>
        <end position="146"/>
    </location>
</feature>
<feature type="domain" description="Globin" evidence="3">
    <location>
        <begin position="2"/>
        <end position="146"/>
    </location>
</feature>
<feature type="binding site" description="distal binding residue">
    <location>
        <position position="63"/>
    </location>
    <ligand>
        <name>heme b</name>
        <dbReference type="ChEBI" id="CHEBI:60344"/>
    </ligand>
    <ligandPart>
        <name>Fe</name>
        <dbReference type="ChEBI" id="CHEBI:18248"/>
    </ligandPart>
</feature>
<feature type="binding site" description="proximal binding residue">
    <location>
        <position position="92"/>
    </location>
    <ligand>
        <name>heme b</name>
        <dbReference type="ChEBI" id="CHEBI:60344"/>
    </ligand>
    <ligandPart>
        <name>Fe</name>
        <dbReference type="ChEBI" id="CHEBI:18248"/>
    </ligandPart>
</feature>
<feature type="modified residue" description="N-acetylvaline" evidence="1">
    <location>
        <position position="1"/>
    </location>
</feature>
<feature type="modified residue" description="Phosphothreonine" evidence="2">
    <location>
        <position position="12"/>
    </location>
</feature>
<feature type="modified residue" description="Phosphoserine" evidence="2">
    <location>
        <position position="44"/>
    </location>
</feature>
<feature type="modified residue" description="N6-acetyllysine" evidence="2">
    <location>
        <position position="59"/>
    </location>
</feature>
<feature type="modified residue" description="N6-acetyllysine" evidence="2">
    <location>
        <position position="82"/>
    </location>
</feature>
<feature type="modified residue" description="S-nitrosocysteine" evidence="2">
    <location>
        <position position="93"/>
    </location>
</feature>
<feature type="modified residue" description="N6-acetyllysine" evidence="2">
    <location>
        <position position="144"/>
    </location>
</feature>
<protein>
    <recommendedName>
        <fullName>Hemoglobin subunit beta</fullName>
    </recommendedName>
    <alternativeName>
        <fullName>Beta-globin</fullName>
    </alternativeName>
    <alternativeName>
        <fullName>Hemoglobin beta chain</fullName>
    </alternativeName>
</protein>
<evidence type="ECO:0000250" key="1">
    <source>
        <dbReference type="UniProtKB" id="P02086"/>
    </source>
</evidence>
<evidence type="ECO:0000250" key="2">
    <source>
        <dbReference type="UniProtKB" id="P68871"/>
    </source>
</evidence>
<evidence type="ECO:0000255" key="3">
    <source>
        <dbReference type="PROSITE-ProRule" id="PRU00238"/>
    </source>
</evidence>
<reference key="1">
    <citation type="thesis" date="1973" institute="University of London" country="United Kingdom">
        <title>Structural studies of Old World monkey haemoglobins in relation to phylogeny.</title>
        <authorList>
            <person name="Hewett-Emmett D."/>
        </authorList>
    </citation>
    <scope>PROTEIN SEQUENCE</scope>
</reference>
<dbReference type="PIR" id="A04620">
    <property type="entry name" value="HBBAG"/>
</dbReference>
<dbReference type="SMR" id="P02029"/>
<dbReference type="Proteomes" id="UP000694411">
    <property type="component" value="Unplaced"/>
</dbReference>
<dbReference type="GO" id="GO:0072562">
    <property type="term" value="C:blood microparticle"/>
    <property type="evidence" value="ECO:0007669"/>
    <property type="project" value="TreeGrafter"/>
</dbReference>
<dbReference type="GO" id="GO:0031838">
    <property type="term" value="C:haptoglobin-hemoglobin complex"/>
    <property type="evidence" value="ECO:0007669"/>
    <property type="project" value="TreeGrafter"/>
</dbReference>
<dbReference type="GO" id="GO:0005833">
    <property type="term" value="C:hemoglobin complex"/>
    <property type="evidence" value="ECO:0007669"/>
    <property type="project" value="InterPro"/>
</dbReference>
<dbReference type="GO" id="GO:0031720">
    <property type="term" value="F:haptoglobin binding"/>
    <property type="evidence" value="ECO:0007669"/>
    <property type="project" value="TreeGrafter"/>
</dbReference>
<dbReference type="GO" id="GO:0020037">
    <property type="term" value="F:heme binding"/>
    <property type="evidence" value="ECO:0007669"/>
    <property type="project" value="InterPro"/>
</dbReference>
<dbReference type="GO" id="GO:0031721">
    <property type="term" value="F:hemoglobin alpha binding"/>
    <property type="evidence" value="ECO:0007669"/>
    <property type="project" value="TreeGrafter"/>
</dbReference>
<dbReference type="GO" id="GO:0046872">
    <property type="term" value="F:metal ion binding"/>
    <property type="evidence" value="ECO:0007669"/>
    <property type="project" value="UniProtKB-KW"/>
</dbReference>
<dbReference type="GO" id="GO:0043177">
    <property type="term" value="F:organic acid binding"/>
    <property type="evidence" value="ECO:0007669"/>
    <property type="project" value="TreeGrafter"/>
</dbReference>
<dbReference type="GO" id="GO:0019825">
    <property type="term" value="F:oxygen binding"/>
    <property type="evidence" value="ECO:0007669"/>
    <property type="project" value="InterPro"/>
</dbReference>
<dbReference type="GO" id="GO:0005344">
    <property type="term" value="F:oxygen carrier activity"/>
    <property type="evidence" value="ECO:0007669"/>
    <property type="project" value="UniProtKB-KW"/>
</dbReference>
<dbReference type="GO" id="GO:0004601">
    <property type="term" value="F:peroxidase activity"/>
    <property type="evidence" value="ECO:0007669"/>
    <property type="project" value="TreeGrafter"/>
</dbReference>
<dbReference type="GO" id="GO:0042744">
    <property type="term" value="P:hydrogen peroxide catabolic process"/>
    <property type="evidence" value="ECO:0007669"/>
    <property type="project" value="TreeGrafter"/>
</dbReference>
<dbReference type="CDD" id="cd08925">
    <property type="entry name" value="Hb-beta-like"/>
    <property type="match status" value="1"/>
</dbReference>
<dbReference type="FunFam" id="1.10.490.10:FF:000001">
    <property type="entry name" value="Hemoglobin subunit beta"/>
    <property type="match status" value="1"/>
</dbReference>
<dbReference type="Gene3D" id="1.10.490.10">
    <property type="entry name" value="Globins"/>
    <property type="match status" value="1"/>
</dbReference>
<dbReference type="InterPro" id="IPR000971">
    <property type="entry name" value="Globin"/>
</dbReference>
<dbReference type="InterPro" id="IPR009050">
    <property type="entry name" value="Globin-like_sf"/>
</dbReference>
<dbReference type="InterPro" id="IPR012292">
    <property type="entry name" value="Globin/Proto"/>
</dbReference>
<dbReference type="InterPro" id="IPR002337">
    <property type="entry name" value="Hemoglobin_b"/>
</dbReference>
<dbReference type="InterPro" id="IPR050056">
    <property type="entry name" value="Hemoglobin_oxygen_transport"/>
</dbReference>
<dbReference type="PANTHER" id="PTHR11442">
    <property type="entry name" value="HEMOGLOBIN FAMILY MEMBER"/>
    <property type="match status" value="1"/>
</dbReference>
<dbReference type="PANTHER" id="PTHR11442:SF42">
    <property type="entry name" value="HEMOGLOBIN SUBUNIT BETA"/>
    <property type="match status" value="1"/>
</dbReference>
<dbReference type="Pfam" id="PF00042">
    <property type="entry name" value="Globin"/>
    <property type="match status" value="1"/>
</dbReference>
<dbReference type="PRINTS" id="PR00814">
    <property type="entry name" value="BETAHAEM"/>
</dbReference>
<dbReference type="SUPFAM" id="SSF46458">
    <property type="entry name" value="Globin-like"/>
    <property type="match status" value="1"/>
</dbReference>
<dbReference type="PROSITE" id="PS01033">
    <property type="entry name" value="GLOBIN"/>
    <property type="match status" value="1"/>
</dbReference>
<organism>
    <name type="scientific">Theropithecus gelada</name>
    <name type="common">Gelada baboon</name>
    <dbReference type="NCBI Taxonomy" id="9565"/>
    <lineage>
        <taxon>Eukaryota</taxon>
        <taxon>Metazoa</taxon>
        <taxon>Chordata</taxon>
        <taxon>Craniata</taxon>
        <taxon>Vertebrata</taxon>
        <taxon>Euteleostomi</taxon>
        <taxon>Mammalia</taxon>
        <taxon>Eutheria</taxon>
        <taxon>Euarchontoglires</taxon>
        <taxon>Primates</taxon>
        <taxon>Haplorrhini</taxon>
        <taxon>Catarrhini</taxon>
        <taxon>Cercopithecidae</taxon>
        <taxon>Cercopithecinae</taxon>
        <taxon>Theropithecus</taxon>
    </lineage>
</organism>
<name>HBB_THEGE</name>
<sequence>VHLTPEEKNAVTTLWGKVNVDEVGGEALGRLLVVYPWTQRFFDSFGDLSSPAAVMGNPKVKAHGKKVLGAFSDGLNHLDNLKGTFAQLSELHCDKLHVDPENFKLLGNVLVCVLAHHFGKEFTPQVQAAYQKVVAGVANALAHKYH</sequence>
<proteinExistence type="evidence at protein level"/>
<comment type="function">
    <text>Involved in oxygen transport from the lung to the various peripheral tissues.</text>
</comment>
<comment type="subunit">
    <text>Heterotetramer of two alpha chains and two beta chains.</text>
</comment>
<comment type="tissue specificity">
    <text>Red blood cells.</text>
</comment>
<comment type="similarity">
    <text evidence="3">Belongs to the globin family.</text>
</comment>
<keyword id="KW-0007">Acetylation</keyword>
<keyword id="KW-0903">Direct protein sequencing</keyword>
<keyword id="KW-0349">Heme</keyword>
<keyword id="KW-0408">Iron</keyword>
<keyword id="KW-0479">Metal-binding</keyword>
<keyword id="KW-0561">Oxygen transport</keyword>
<keyword id="KW-0597">Phosphoprotein</keyword>
<keyword id="KW-1185">Reference proteome</keyword>
<keyword id="KW-0702">S-nitrosylation</keyword>
<keyword id="KW-0813">Transport</keyword>